<sequence>MSLDTAIFAGGCFWCMVQPFDTYPGIEKVESGYTGGHVANPTYEQVCSGTTGHTEAVKITFDPDKISYKDLVEIYWHQTDPTDASGQFQDRGDNYRPVIFVKNDEQRKIAEKSKKALQESGRFGDAKIVTTIEDVQPFYPAEDYHQGFYKKDPQRFALEEAGGRQQFIEKYWKNN</sequence>
<proteinExistence type="inferred from homology"/>
<feature type="chain" id="PRO_1000068330" description="Peptide methionine sulfoxide reductase MsrA">
    <location>
        <begin position="1"/>
        <end position="175"/>
    </location>
</feature>
<feature type="active site" evidence="1">
    <location>
        <position position="12"/>
    </location>
</feature>
<reference key="1">
    <citation type="journal article" date="2011" name="PLoS Genet.">
        <title>The evolution of host specialization in the vertebrate gut symbiont Lactobacillus reuteri.</title>
        <authorList>
            <person name="Frese S.A."/>
            <person name="Benson A.K."/>
            <person name="Tannock G.W."/>
            <person name="Loach D.M."/>
            <person name="Kim J."/>
            <person name="Zhang M."/>
            <person name="Oh P.L."/>
            <person name="Heng N.C."/>
            <person name="Patil P.B."/>
            <person name="Juge N."/>
            <person name="Mackenzie D.A."/>
            <person name="Pearson B.M."/>
            <person name="Lapidus A."/>
            <person name="Dalin E."/>
            <person name="Tice H."/>
            <person name="Goltsman E."/>
            <person name="Land M."/>
            <person name="Hauser L."/>
            <person name="Ivanova N."/>
            <person name="Kyrpides N.C."/>
            <person name="Walter J."/>
        </authorList>
    </citation>
    <scope>NUCLEOTIDE SEQUENCE [LARGE SCALE GENOMIC DNA]</scope>
    <source>
        <strain>DSM 20016</strain>
    </source>
</reference>
<organism>
    <name type="scientific">Limosilactobacillus reuteri (strain DSM 20016)</name>
    <name type="common">Lactobacillus reuteri</name>
    <dbReference type="NCBI Taxonomy" id="557436"/>
    <lineage>
        <taxon>Bacteria</taxon>
        <taxon>Bacillati</taxon>
        <taxon>Bacillota</taxon>
        <taxon>Bacilli</taxon>
        <taxon>Lactobacillales</taxon>
        <taxon>Lactobacillaceae</taxon>
        <taxon>Limosilactobacillus</taxon>
    </lineage>
</organism>
<comment type="function">
    <text evidence="1">Has an important function as a repair enzyme for proteins that have been inactivated by oxidation. Catalyzes the reversible oxidation-reduction of methionine sulfoxide in proteins to methionine.</text>
</comment>
<comment type="catalytic activity">
    <reaction evidence="1">
        <text>L-methionyl-[protein] + [thioredoxin]-disulfide + H2O = L-methionyl-(S)-S-oxide-[protein] + [thioredoxin]-dithiol</text>
        <dbReference type="Rhea" id="RHEA:14217"/>
        <dbReference type="Rhea" id="RHEA-COMP:10698"/>
        <dbReference type="Rhea" id="RHEA-COMP:10700"/>
        <dbReference type="Rhea" id="RHEA-COMP:12313"/>
        <dbReference type="Rhea" id="RHEA-COMP:12315"/>
        <dbReference type="ChEBI" id="CHEBI:15377"/>
        <dbReference type="ChEBI" id="CHEBI:16044"/>
        <dbReference type="ChEBI" id="CHEBI:29950"/>
        <dbReference type="ChEBI" id="CHEBI:44120"/>
        <dbReference type="ChEBI" id="CHEBI:50058"/>
        <dbReference type="EC" id="1.8.4.11"/>
    </reaction>
</comment>
<comment type="catalytic activity">
    <reaction evidence="1">
        <text>[thioredoxin]-disulfide + L-methionine + H2O = L-methionine (S)-S-oxide + [thioredoxin]-dithiol</text>
        <dbReference type="Rhea" id="RHEA:19993"/>
        <dbReference type="Rhea" id="RHEA-COMP:10698"/>
        <dbReference type="Rhea" id="RHEA-COMP:10700"/>
        <dbReference type="ChEBI" id="CHEBI:15377"/>
        <dbReference type="ChEBI" id="CHEBI:29950"/>
        <dbReference type="ChEBI" id="CHEBI:50058"/>
        <dbReference type="ChEBI" id="CHEBI:57844"/>
        <dbReference type="ChEBI" id="CHEBI:58772"/>
        <dbReference type="EC" id="1.8.4.11"/>
    </reaction>
</comment>
<comment type="similarity">
    <text evidence="1">Belongs to the MsrA Met sulfoxide reductase family.</text>
</comment>
<keyword id="KW-0560">Oxidoreductase</keyword>
<keyword id="KW-1185">Reference proteome</keyword>
<evidence type="ECO:0000255" key="1">
    <source>
        <dbReference type="HAMAP-Rule" id="MF_01401"/>
    </source>
</evidence>
<accession>A5VKT1</accession>
<gene>
    <name evidence="1" type="primary">msrA</name>
    <name type="ordered locus">Lreu_1198</name>
</gene>
<dbReference type="EC" id="1.8.4.11" evidence="1"/>
<dbReference type="EMBL" id="CP000705">
    <property type="protein sequence ID" value="ABQ83455.1"/>
    <property type="molecule type" value="Genomic_DNA"/>
</dbReference>
<dbReference type="RefSeq" id="WP_011953507.1">
    <property type="nucleotide sequence ID" value="NC_009513.1"/>
</dbReference>
<dbReference type="SMR" id="A5VKT1"/>
<dbReference type="STRING" id="557436.Lreu_1198"/>
<dbReference type="KEGG" id="lre:Lreu_1198"/>
<dbReference type="eggNOG" id="COG0225">
    <property type="taxonomic scope" value="Bacteria"/>
</dbReference>
<dbReference type="HOGENOM" id="CLU_031040_10_1_9"/>
<dbReference type="Proteomes" id="UP000001991">
    <property type="component" value="Chromosome"/>
</dbReference>
<dbReference type="GO" id="GO:0033744">
    <property type="term" value="F:L-methionine:thioredoxin-disulfide S-oxidoreductase activity"/>
    <property type="evidence" value="ECO:0007669"/>
    <property type="project" value="RHEA"/>
</dbReference>
<dbReference type="GO" id="GO:0008113">
    <property type="term" value="F:peptide-methionine (S)-S-oxide reductase activity"/>
    <property type="evidence" value="ECO:0007669"/>
    <property type="project" value="UniProtKB-UniRule"/>
</dbReference>
<dbReference type="GO" id="GO:0036211">
    <property type="term" value="P:protein modification process"/>
    <property type="evidence" value="ECO:0007669"/>
    <property type="project" value="UniProtKB-UniRule"/>
</dbReference>
<dbReference type="Gene3D" id="3.30.1060.10">
    <property type="entry name" value="Peptide methionine sulphoxide reductase MsrA"/>
    <property type="match status" value="1"/>
</dbReference>
<dbReference type="HAMAP" id="MF_01401">
    <property type="entry name" value="MsrA"/>
    <property type="match status" value="1"/>
</dbReference>
<dbReference type="InterPro" id="IPR002569">
    <property type="entry name" value="Met_Sox_Rdtase_MsrA_dom"/>
</dbReference>
<dbReference type="InterPro" id="IPR036509">
    <property type="entry name" value="Met_Sox_Rdtase_MsrA_sf"/>
</dbReference>
<dbReference type="NCBIfam" id="TIGR00401">
    <property type="entry name" value="msrA"/>
    <property type="match status" value="1"/>
</dbReference>
<dbReference type="PANTHER" id="PTHR43774">
    <property type="entry name" value="PEPTIDE METHIONINE SULFOXIDE REDUCTASE"/>
    <property type="match status" value="1"/>
</dbReference>
<dbReference type="PANTHER" id="PTHR43774:SF1">
    <property type="entry name" value="PEPTIDE METHIONINE SULFOXIDE REDUCTASE MSRA 2"/>
    <property type="match status" value="1"/>
</dbReference>
<dbReference type="Pfam" id="PF01625">
    <property type="entry name" value="PMSR"/>
    <property type="match status" value="1"/>
</dbReference>
<dbReference type="SUPFAM" id="SSF55068">
    <property type="entry name" value="Peptide methionine sulfoxide reductase"/>
    <property type="match status" value="1"/>
</dbReference>
<name>MSRA_LIMRD</name>
<protein>
    <recommendedName>
        <fullName evidence="1">Peptide methionine sulfoxide reductase MsrA</fullName>
        <shortName evidence="1">Protein-methionine-S-oxide reductase</shortName>
        <ecNumber evidence="1">1.8.4.11</ecNumber>
    </recommendedName>
    <alternativeName>
        <fullName evidence="1">Peptide-methionine (S)-S-oxide reductase</fullName>
        <shortName evidence="1">Peptide Met(O) reductase</shortName>
    </alternativeName>
</protein>